<organism>
    <name type="scientific">Biomphalaria glabrata</name>
    <name type="common">Bloodfluke planorb</name>
    <name type="synonym">Freshwater snail</name>
    <dbReference type="NCBI Taxonomy" id="6526"/>
    <lineage>
        <taxon>Eukaryota</taxon>
        <taxon>Metazoa</taxon>
        <taxon>Spiralia</taxon>
        <taxon>Lophotrochozoa</taxon>
        <taxon>Mollusca</taxon>
        <taxon>Gastropoda</taxon>
        <taxon>Heterobranchia</taxon>
        <taxon>Euthyneura</taxon>
        <taxon>Panpulmonata</taxon>
        <taxon>Hygrophila</taxon>
        <taxon>Lymnaeoidea</taxon>
        <taxon>Planorbidae</taxon>
        <taxon>Biomphalaria</taxon>
    </lineage>
</organism>
<evidence type="ECO:0000250" key="1">
    <source>
        <dbReference type="UniProtKB" id="P19793"/>
    </source>
</evidence>
<evidence type="ECO:0000255" key="2"/>
<evidence type="ECO:0000255" key="3">
    <source>
        <dbReference type="PROSITE-ProRule" id="PRU00407"/>
    </source>
</evidence>
<evidence type="ECO:0000255" key="4">
    <source>
        <dbReference type="PROSITE-ProRule" id="PRU01189"/>
    </source>
</evidence>
<evidence type="ECO:0000256" key="5">
    <source>
        <dbReference type="SAM" id="MobiDB-lite"/>
    </source>
</evidence>
<evidence type="ECO:0000269" key="6">
    <source>
    </source>
</evidence>
<evidence type="ECO:0000269" key="7">
    <source>
    </source>
</evidence>
<evidence type="ECO:0000303" key="8">
    <source>
    </source>
</evidence>
<evidence type="ECO:0000303" key="9">
    <source>
    </source>
</evidence>
<evidence type="ECO:0000305" key="10"/>
<evidence type="ECO:0000312" key="11">
    <source>
        <dbReference type="EMBL" id="AAL86461.1"/>
    </source>
</evidence>
<evidence type="ECO:0007744" key="12">
    <source>
        <dbReference type="PDB" id="1XIU"/>
    </source>
</evidence>
<evidence type="ECO:0007829" key="13">
    <source>
        <dbReference type="PDB" id="1XIU"/>
    </source>
</evidence>
<name>RXR_BIOGL</name>
<reference evidence="10 11" key="1">
    <citation type="journal article" date="2005" name="J. Mol. Endocrinol.">
        <title>A conserved retinoid X receptor (RXR) from the mollusk Biomphalaria glabrata transactivates transcription in the presence of retinoids.</title>
        <authorList>
            <person name="Bouton D."/>
            <person name="Escriva H."/>
            <person name="de Mendonca R.L."/>
            <person name="Glineur C."/>
            <person name="Bertin B."/>
            <person name="Noel C."/>
            <person name="Robinson-Rechavi M."/>
            <person name="de Groot A."/>
            <person name="Cornette J."/>
            <person name="Laudet V."/>
            <person name="Pierce R.J."/>
        </authorList>
    </citation>
    <scope>NUCLEOTIDE SEQUENCE [MRNA]</scope>
    <scope>FUNCTION</scope>
    <scope>DIMERIZATION</scope>
    <scope>SUBCELLULAR LOCATION</scope>
    <source>
        <tissue evidence="6">Embryo</tissue>
    </source>
</reference>
<reference evidence="10" key="2">
    <citation type="journal article" date="2005" name="J. Mol. Biol.">
        <title>Crystal structure of a novel tetrameric complex of agonist-bound ligand-binding domain of Biomphalaria glabrata retinoid X receptor.</title>
        <authorList>
            <person name="de Groot A."/>
            <person name="de Rosny E."/>
            <person name="Juillan-Binard C."/>
            <person name="Ferrer J.L."/>
            <person name="Laudet V."/>
            <person name="Pierce R.J."/>
            <person name="Pebay-Peyroula E."/>
            <person name="Fontecilla-Camps J.C."/>
            <person name="Borel F."/>
        </authorList>
    </citation>
    <scope>X-RAY CRYSTALLOGRAPHY (2.5 ANGSTROMS) OF 207-436 IN COMPLEX WITH 9-CIS-RETINOIC ACID AND NCOA1-DERIVED PEPTIDE</scope>
    <scope>RETINOIC ACID-BINDING</scope>
    <scope>TETRAMERIZATION</scope>
</reference>
<protein>
    <recommendedName>
        <fullName>Retinoic acid receptor RXR</fullName>
    </recommendedName>
    <alternativeName>
        <fullName evidence="11">RXR-like protein</fullName>
    </alternativeName>
    <alternativeName>
        <fullName evidence="8 9">Retinoid X receptor</fullName>
        <shortName evidence="8 9">BgRXR</shortName>
    </alternativeName>
</protein>
<gene>
    <name evidence="11" type="primary">RXR</name>
</gene>
<sequence>MDRSEGMDTLENSMPSGMSMGMTMGGHQGHPPPDIKPDISSLTSPTSTHGYYGFGPGGMPSMASSTQPSPGPQQMHSPGMHSPTSSMGSPPMLCLSPSGPSPSPGLPHSSLHTKHICAICGDRASGKHYGVYSCEGCKGFFKRTVRKDLTYACRDDKNCMIDKRQRNRCQYCRYMKCLSMGMKREAVQEERQRVKEKGDGEVESTSGANNDMPVEQILEAELAVDPKIDTYIDAQKDPVTNICQAADKQLFTLVEWAKRIPHFTELPLEDQVILLRAGWNELLIAGFSHRSIMAKDGILLATGLHVHRSSAHQAGVGTIFDRVLTELVAKMRDMKMDKTELGCLRAVVLFNPDAKGLTAVQEVEQLREKVYASLEEYTKSRYPEEPGRFAKLLLRLPALRSIGLKCLEHLFFFKLIGDQPIDTFLMEMLENPSPAT</sequence>
<feature type="chain" id="PRO_0000394456" description="Retinoic acid receptor RXR">
    <location>
        <begin position="1"/>
        <end position="436"/>
    </location>
</feature>
<feature type="domain" description="NR LBD" evidence="4 7">
    <location>
        <begin position="209"/>
        <end position="432"/>
    </location>
</feature>
<feature type="DNA-binding region" description="Nuclear receptor" evidence="1 3">
    <location>
        <begin position="117"/>
        <end position="182"/>
    </location>
</feature>
<feature type="zinc finger region" description="NR C4-type" evidence="3">
    <location>
        <begin position="117"/>
        <end position="137"/>
    </location>
</feature>
<feature type="zinc finger region" description="NR C4-type" evidence="3">
    <location>
        <begin position="153"/>
        <end position="172"/>
    </location>
</feature>
<feature type="region of interest" description="Modulating" evidence="1">
    <location>
        <begin position="1"/>
        <end position="116"/>
    </location>
</feature>
<feature type="region of interest" description="Disordered" evidence="5">
    <location>
        <begin position="1"/>
        <end position="108"/>
    </location>
</feature>
<feature type="region of interest" description="Hinge" evidence="1">
    <location>
        <begin position="183"/>
        <end position="206"/>
    </location>
</feature>
<feature type="region of interest" description="Disordered" evidence="5">
    <location>
        <begin position="189"/>
        <end position="209"/>
    </location>
</feature>
<feature type="compositionally biased region" description="Low complexity" evidence="5">
    <location>
        <begin position="13"/>
        <end position="22"/>
    </location>
</feature>
<feature type="compositionally biased region" description="Polar residues" evidence="5">
    <location>
        <begin position="40"/>
        <end position="49"/>
    </location>
</feature>
<feature type="compositionally biased region" description="Polar residues" evidence="5">
    <location>
        <begin position="62"/>
        <end position="76"/>
    </location>
</feature>
<feature type="compositionally biased region" description="Low complexity" evidence="5">
    <location>
        <begin position="85"/>
        <end position="98"/>
    </location>
</feature>
<feature type="compositionally biased region" description="Basic and acidic residues" evidence="5">
    <location>
        <begin position="189"/>
        <end position="200"/>
    </location>
</feature>
<feature type="binding site" evidence="7 12">
    <location>
        <position position="290"/>
    </location>
    <ligand>
        <name>9-cis-retinoate</name>
        <dbReference type="ChEBI" id="CHEBI:78630"/>
    </ligand>
</feature>
<feature type="binding site" evidence="7 12">
    <location>
        <position position="301"/>
    </location>
    <ligand>
        <name>9-cis-retinoate</name>
        <dbReference type="ChEBI" id="CHEBI:78630"/>
    </ligand>
</feature>
<feature type="helix" evidence="13">
    <location>
        <begin position="214"/>
        <end position="224"/>
    </location>
</feature>
<feature type="strand" evidence="13">
    <location>
        <begin position="232"/>
        <end position="234"/>
    </location>
</feature>
<feature type="helix" evidence="13">
    <location>
        <begin position="238"/>
        <end position="258"/>
    </location>
</feature>
<feature type="helix" evidence="13">
    <location>
        <begin position="263"/>
        <end position="265"/>
    </location>
</feature>
<feature type="helix" evidence="13">
    <location>
        <begin position="268"/>
        <end position="290"/>
    </location>
</feature>
<feature type="helix" evidence="13">
    <location>
        <begin position="291"/>
        <end position="293"/>
    </location>
</feature>
<feature type="strand" evidence="13">
    <location>
        <begin position="294"/>
        <end position="299"/>
    </location>
</feature>
<feature type="strand" evidence="13">
    <location>
        <begin position="303"/>
        <end position="307"/>
    </location>
</feature>
<feature type="helix" evidence="13">
    <location>
        <begin position="308"/>
        <end position="313"/>
    </location>
</feature>
<feature type="helix" evidence="13">
    <location>
        <begin position="317"/>
        <end position="326"/>
    </location>
</feature>
<feature type="helix" evidence="13">
    <location>
        <begin position="328"/>
        <end position="333"/>
    </location>
</feature>
<feature type="helix" evidence="13">
    <location>
        <begin position="338"/>
        <end position="349"/>
    </location>
</feature>
<feature type="helix" evidence="13">
    <location>
        <begin position="360"/>
        <end position="381"/>
    </location>
</feature>
<feature type="helix" evidence="13">
    <location>
        <begin position="388"/>
        <end position="393"/>
    </location>
</feature>
<feature type="helix" evidence="13">
    <location>
        <begin position="396"/>
        <end position="417"/>
    </location>
</feature>
<feature type="helix" evidence="13">
    <location>
        <begin position="423"/>
        <end position="428"/>
    </location>
</feature>
<accession>Q8T5C6</accession>
<dbReference type="EMBL" id="AY048663">
    <property type="protein sequence ID" value="AAL86461.1"/>
    <property type="molecule type" value="mRNA"/>
</dbReference>
<dbReference type="RefSeq" id="NP_001298239.1">
    <property type="nucleotide sequence ID" value="NM_001311310.1"/>
</dbReference>
<dbReference type="PDB" id="1XIU">
    <property type="method" value="X-ray"/>
    <property type="resolution" value="2.50 A"/>
    <property type="chains" value="A/B=207-436"/>
</dbReference>
<dbReference type="PDBsum" id="1XIU"/>
<dbReference type="SMR" id="Q8T5C6"/>
<dbReference type="STRING" id="6526.Q8T5C6"/>
<dbReference type="GeneID" id="106073343"/>
<dbReference type="VEuPathDB" id="VectorBase:BGLAX_029316"/>
<dbReference type="VEuPathDB" id="VectorBase:BGLB010204"/>
<dbReference type="OrthoDB" id="5873264at2759"/>
<dbReference type="EvolutionaryTrace" id="Q8T5C6"/>
<dbReference type="Proteomes" id="UP000076420">
    <property type="component" value="Unassembled WGS sequence"/>
</dbReference>
<dbReference type="Proteomes" id="UP001165740">
    <property type="component" value="Chromosome 9"/>
</dbReference>
<dbReference type="GO" id="GO:0005634">
    <property type="term" value="C:nucleus"/>
    <property type="evidence" value="ECO:0007669"/>
    <property type="project" value="UniProtKB-SubCell"/>
</dbReference>
<dbReference type="GO" id="GO:0003707">
    <property type="term" value="F:nuclear steroid receptor activity"/>
    <property type="evidence" value="ECO:0007669"/>
    <property type="project" value="InterPro"/>
</dbReference>
<dbReference type="GO" id="GO:0016918">
    <property type="term" value="F:retinal binding"/>
    <property type="evidence" value="ECO:0007669"/>
    <property type="project" value="UniProtKB-KW"/>
</dbReference>
<dbReference type="GO" id="GO:0043565">
    <property type="term" value="F:sequence-specific DNA binding"/>
    <property type="evidence" value="ECO:0007669"/>
    <property type="project" value="InterPro"/>
</dbReference>
<dbReference type="GO" id="GO:0008270">
    <property type="term" value="F:zinc ion binding"/>
    <property type="evidence" value="ECO:0007669"/>
    <property type="project" value="UniProtKB-KW"/>
</dbReference>
<dbReference type="CDD" id="cd06956">
    <property type="entry name" value="NR_DBD_RXR"/>
    <property type="match status" value="1"/>
</dbReference>
<dbReference type="CDD" id="cd06943">
    <property type="entry name" value="NR_LBD_RXR_like"/>
    <property type="match status" value="1"/>
</dbReference>
<dbReference type="FunFam" id="3.30.50.10:FF:000005">
    <property type="entry name" value="Retinoic acid receptor RXR-alpha"/>
    <property type="match status" value="1"/>
</dbReference>
<dbReference type="FunFam" id="1.10.565.10:FF:000052">
    <property type="entry name" value="Ultraspiracle nuclear receptor"/>
    <property type="match status" value="1"/>
</dbReference>
<dbReference type="Gene3D" id="3.30.50.10">
    <property type="entry name" value="Erythroid Transcription Factor GATA-1, subunit A"/>
    <property type="match status" value="1"/>
</dbReference>
<dbReference type="Gene3D" id="1.10.565.10">
    <property type="entry name" value="Retinoid X Receptor"/>
    <property type="match status" value="1"/>
</dbReference>
<dbReference type="IDEAL" id="IID50154"/>
<dbReference type="InterPro" id="IPR035500">
    <property type="entry name" value="NHR-like_dom_sf"/>
</dbReference>
<dbReference type="InterPro" id="IPR000536">
    <property type="entry name" value="Nucl_hrmn_rcpt_lig-bd"/>
</dbReference>
<dbReference type="InterPro" id="IPR050274">
    <property type="entry name" value="Nuclear_hormone_rcpt_NR2"/>
</dbReference>
<dbReference type="InterPro" id="IPR001723">
    <property type="entry name" value="Nuclear_hrmn_rcpt"/>
</dbReference>
<dbReference type="InterPro" id="IPR000003">
    <property type="entry name" value="Retinoid-X_rcpt/HNF4"/>
</dbReference>
<dbReference type="InterPro" id="IPR001628">
    <property type="entry name" value="Znf_hrmn_rcpt"/>
</dbReference>
<dbReference type="InterPro" id="IPR013088">
    <property type="entry name" value="Znf_NHR/GATA"/>
</dbReference>
<dbReference type="PANTHER" id="PTHR24083">
    <property type="entry name" value="NUCLEAR HORMONE RECEPTOR"/>
    <property type="match status" value="1"/>
</dbReference>
<dbReference type="Pfam" id="PF00104">
    <property type="entry name" value="Hormone_recep"/>
    <property type="match status" value="1"/>
</dbReference>
<dbReference type="Pfam" id="PF00105">
    <property type="entry name" value="zf-C4"/>
    <property type="match status" value="1"/>
</dbReference>
<dbReference type="PRINTS" id="PR00545">
    <property type="entry name" value="RETINOIDXR"/>
</dbReference>
<dbReference type="PRINTS" id="PR00398">
    <property type="entry name" value="STRDHORMONER"/>
</dbReference>
<dbReference type="PRINTS" id="PR00047">
    <property type="entry name" value="STROIDFINGER"/>
</dbReference>
<dbReference type="SMART" id="SM00430">
    <property type="entry name" value="HOLI"/>
    <property type="match status" value="1"/>
</dbReference>
<dbReference type="SMART" id="SM00399">
    <property type="entry name" value="ZnF_C4"/>
    <property type="match status" value="1"/>
</dbReference>
<dbReference type="SUPFAM" id="SSF57716">
    <property type="entry name" value="Glucocorticoid receptor-like (DNA-binding domain)"/>
    <property type="match status" value="1"/>
</dbReference>
<dbReference type="SUPFAM" id="SSF48508">
    <property type="entry name" value="Nuclear receptor ligand-binding domain"/>
    <property type="match status" value="1"/>
</dbReference>
<dbReference type="PROSITE" id="PS51843">
    <property type="entry name" value="NR_LBD"/>
    <property type="match status" value="1"/>
</dbReference>
<dbReference type="PROSITE" id="PS00031">
    <property type="entry name" value="NUCLEAR_REC_DBD_1"/>
    <property type="match status" value="1"/>
</dbReference>
<dbReference type="PROSITE" id="PS51030">
    <property type="entry name" value="NUCLEAR_REC_DBD_2"/>
    <property type="match status" value="1"/>
</dbReference>
<comment type="function">
    <text evidence="6">Ligand-dependent transcription factor probably involved in the retinoic acid response pathway. Binds 9-cis-retinoic acid (9C-RA) and, to a lesser extent, docosahexaenoic acid (DHA), phytanic acid, methoprene acid and oleic acid. Binds to double-stranded DNA sequences containing direct repeats (DR) with the consensus sequence 5'-[AG]GGTCA-3' and 1, 2, 3, 4 or 5 nucleotides in between (DR1, DR2, DR3. DR4 and DR5, respectively). Binding to DR1 is strongest. Transactivates gene expression when 9C-RA or DHA is bound.</text>
</comment>
<comment type="subunit">
    <text evidence="6 7 10">Homodimer (via ligand-binding domain). Heterodimer (Probable). Homotetramer consisting of 2 canonical homodimers. Within the tetramer, each monomer binds one molecule of 9C-RA and a NCOA1-derived peptide containing an L-X(2)-L-L motif (Probable).</text>
</comment>
<comment type="subcellular location">
    <subcellularLocation>
        <location evidence="3 6">Nucleus</location>
    </subcellularLocation>
</comment>
<comment type="domain">
    <text evidence="10">Composed of three domains: a modulating N-terminal domain, a DNA-binding domain and a C-terminal ligand-binding domain.</text>
</comment>
<comment type="similarity">
    <text evidence="2">Belongs to the nuclear hormone receptor family. NR2 subfamily.</text>
</comment>
<keyword id="KW-0002">3D-structure</keyword>
<keyword id="KW-0238">DNA-binding</keyword>
<keyword id="KW-0446">Lipid-binding</keyword>
<keyword id="KW-0479">Metal-binding</keyword>
<keyword id="KW-0539">Nucleus</keyword>
<keyword id="KW-0675">Receptor</keyword>
<keyword id="KW-1185">Reference proteome</keyword>
<keyword id="KW-0804">Transcription</keyword>
<keyword id="KW-0805">Transcription regulation</keyword>
<keyword id="KW-0845">Vitamin A</keyword>
<keyword id="KW-0862">Zinc</keyword>
<keyword id="KW-0863">Zinc-finger</keyword>
<proteinExistence type="evidence at protein level"/>